<dbReference type="EMBL" id="CP001488">
    <property type="protein sequence ID" value="ACO00991.1"/>
    <property type="molecule type" value="Genomic_DNA"/>
</dbReference>
<dbReference type="RefSeq" id="WP_002967737.1">
    <property type="nucleotide sequence ID" value="NC_012441.1"/>
</dbReference>
<dbReference type="SMR" id="C0RJI3"/>
<dbReference type="GeneID" id="97533542"/>
<dbReference type="KEGG" id="bmi:BMEA_A1260"/>
<dbReference type="HOGENOM" id="CLU_131047_1_2_5"/>
<dbReference type="Proteomes" id="UP000001748">
    <property type="component" value="Chromosome I"/>
</dbReference>
<dbReference type="GO" id="GO:0022625">
    <property type="term" value="C:cytosolic large ribosomal subunit"/>
    <property type="evidence" value="ECO:0007669"/>
    <property type="project" value="TreeGrafter"/>
</dbReference>
<dbReference type="GO" id="GO:0003735">
    <property type="term" value="F:structural constituent of ribosome"/>
    <property type="evidence" value="ECO:0007669"/>
    <property type="project" value="InterPro"/>
</dbReference>
<dbReference type="GO" id="GO:0006412">
    <property type="term" value="P:translation"/>
    <property type="evidence" value="ECO:0007669"/>
    <property type="project" value="UniProtKB-UniRule"/>
</dbReference>
<dbReference type="CDD" id="cd01658">
    <property type="entry name" value="Ribosomal_L30"/>
    <property type="match status" value="1"/>
</dbReference>
<dbReference type="Gene3D" id="3.30.1390.20">
    <property type="entry name" value="Ribosomal protein L30, ferredoxin-like fold domain"/>
    <property type="match status" value="1"/>
</dbReference>
<dbReference type="HAMAP" id="MF_01371_B">
    <property type="entry name" value="Ribosomal_uL30_B"/>
    <property type="match status" value="1"/>
</dbReference>
<dbReference type="InterPro" id="IPR036919">
    <property type="entry name" value="Ribo_uL30_ferredoxin-like_sf"/>
</dbReference>
<dbReference type="InterPro" id="IPR005996">
    <property type="entry name" value="Ribosomal_uL30_bac-type"/>
</dbReference>
<dbReference type="InterPro" id="IPR016082">
    <property type="entry name" value="Ribosomal_uL30_ferredoxin-like"/>
</dbReference>
<dbReference type="NCBIfam" id="TIGR01308">
    <property type="entry name" value="rpmD_bact"/>
    <property type="match status" value="1"/>
</dbReference>
<dbReference type="PANTHER" id="PTHR15892:SF2">
    <property type="entry name" value="LARGE RIBOSOMAL SUBUNIT PROTEIN UL30M"/>
    <property type="match status" value="1"/>
</dbReference>
<dbReference type="PANTHER" id="PTHR15892">
    <property type="entry name" value="MITOCHONDRIAL RIBOSOMAL PROTEIN L30"/>
    <property type="match status" value="1"/>
</dbReference>
<dbReference type="Pfam" id="PF00327">
    <property type="entry name" value="Ribosomal_L30"/>
    <property type="match status" value="1"/>
</dbReference>
<dbReference type="PIRSF" id="PIRSF002211">
    <property type="entry name" value="Ribosomal_L30_bac-type"/>
    <property type="match status" value="1"/>
</dbReference>
<dbReference type="SUPFAM" id="SSF55129">
    <property type="entry name" value="Ribosomal protein L30p/L7e"/>
    <property type="match status" value="1"/>
</dbReference>
<organism>
    <name type="scientific">Brucella melitensis biotype 2 (strain ATCC 23457)</name>
    <dbReference type="NCBI Taxonomy" id="546272"/>
    <lineage>
        <taxon>Bacteria</taxon>
        <taxon>Pseudomonadati</taxon>
        <taxon>Pseudomonadota</taxon>
        <taxon>Alphaproteobacteria</taxon>
        <taxon>Hyphomicrobiales</taxon>
        <taxon>Brucellaceae</taxon>
        <taxon>Brucella/Ochrobactrum group</taxon>
        <taxon>Brucella</taxon>
    </lineage>
</organism>
<evidence type="ECO:0000255" key="1">
    <source>
        <dbReference type="HAMAP-Rule" id="MF_01371"/>
    </source>
</evidence>
<evidence type="ECO:0000305" key="2"/>
<reference key="1">
    <citation type="submission" date="2009-03" db="EMBL/GenBank/DDBJ databases">
        <title>Brucella melitensis ATCC 23457 whole genome shotgun sequencing project.</title>
        <authorList>
            <person name="Setubal J.C."/>
            <person name="Boyle S."/>
            <person name="Crasta O.R."/>
            <person name="Gillespie J.J."/>
            <person name="Kenyon R.W."/>
            <person name="Lu J."/>
            <person name="Mane S."/>
            <person name="Nagrani S."/>
            <person name="Shallom J.M."/>
            <person name="Shallom S."/>
            <person name="Shukla M."/>
            <person name="Snyder E.E."/>
            <person name="Sobral B.W."/>
            <person name="Wattam A.R."/>
            <person name="Will R."/>
            <person name="Williams K."/>
            <person name="Yoo H."/>
            <person name="Munk C."/>
            <person name="Tapia R."/>
            <person name="Han C."/>
            <person name="Detter J.C."/>
            <person name="Bruce D."/>
            <person name="Brettin T.S."/>
        </authorList>
    </citation>
    <scope>NUCLEOTIDE SEQUENCE [LARGE SCALE GENOMIC DNA]</scope>
    <source>
        <strain>ATCC 23457</strain>
    </source>
</reference>
<sequence length="65" mass="7172">MAEKKGKTVTVEQIGSPIRRPAEQRATLIGLGLNKMHRRSTLEDTPAVRGMIAKLPHLVRVVDEA</sequence>
<proteinExistence type="inferred from homology"/>
<feature type="chain" id="PRO_1000184129" description="Large ribosomal subunit protein uL30">
    <location>
        <begin position="1"/>
        <end position="65"/>
    </location>
</feature>
<gene>
    <name evidence="1" type="primary">rpmD</name>
    <name type="ordered locus">BMEA_A1260</name>
</gene>
<name>RL30_BRUMB</name>
<comment type="subunit">
    <text evidence="1">Part of the 50S ribosomal subunit.</text>
</comment>
<comment type="similarity">
    <text evidence="1">Belongs to the universal ribosomal protein uL30 family.</text>
</comment>
<accession>C0RJI3</accession>
<keyword id="KW-0687">Ribonucleoprotein</keyword>
<keyword id="KW-0689">Ribosomal protein</keyword>
<protein>
    <recommendedName>
        <fullName evidence="1">Large ribosomal subunit protein uL30</fullName>
    </recommendedName>
    <alternativeName>
        <fullName evidence="2">50S ribosomal protein L30</fullName>
    </alternativeName>
</protein>